<organism>
    <name type="scientific">Boselaphus tragocamelus</name>
    <name type="common">Nilgai</name>
    <dbReference type="NCBI Taxonomy" id="9917"/>
    <lineage>
        <taxon>Eukaryota</taxon>
        <taxon>Metazoa</taxon>
        <taxon>Chordata</taxon>
        <taxon>Craniata</taxon>
        <taxon>Vertebrata</taxon>
        <taxon>Euteleostomi</taxon>
        <taxon>Mammalia</taxon>
        <taxon>Eutheria</taxon>
        <taxon>Laurasiatheria</taxon>
        <taxon>Artiodactyla</taxon>
        <taxon>Ruminantia</taxon>
        <taxon>Pecora</taxon>
        <taxon>Bovidae</taxon>
        <taxon>Bovinae</taxon>
        <taxon>Boselaphus</taxon>
    </lineage>
</organism>
<gene>
    <name type="primary">TLR4</name>
</gene>
<keyword id="KW-1003">Cell membrane</keyword>
<keyword id="KW-0966">Cell projection</keyword>
<keyword id="KW-1015">Disulfide bond</keyword>
<keyword id="KW-0967">Endosome</keyword>
<keyword id="KW-0325">Glycoprotein</keyword>
<keyword id="KW-0391">Immunity</keyword>
<keyword id="KW-0395">Inflammatory response</keyword>
<keyword id="KW-0399">Innate immunity</keyword>
<keyword id="KW-0433">Leucine-rich repeat</keyword>
<keyword id="KW-0472">Membrane</keyword>
<keyword id="KW-0520">NAD</keyword>
<keyword id="KW-0675">Receptor</keyword>
<keyword id="KW-0677">Repeat</keyword>
<keyword id="KW-0732">Signal</keyword>
<keyword id="KW-0812">Transmembrane</keyword>
<keyword id="KW-1133">Transmembrane helix</keyword>
<keyword id="KW-0832">Ubl conjugation</keyword>
<dbReference type="EMBL" id="DQ286730">
    <property type="protein sequence ID" value="ABB97024.1"/>
    <property type="molecule type" value="mRNA"/>
</dbReference>
<dbReference type="SMR" id="Q2V898"/>
<dbReference type="GlyCosmos" id="Q2V898">
    <property type="glycosylation" value="11 sites, No reported glycans"/>
</dbReference>
<dbReference type="GO" id="GO:0005769">
    <property type="term" value="C:early endosome"/>
    <property type="evidence" value="ECO:0007669"/>
    <property type="project" value="UniProtKB-SubCell"/>
</dbReference>
<dbReference type="GO" id="GO:0046696">
    <property type="term" value="C:lipopolysaccharide receptor complex"/>
    <property type="evidence" value="ECO:0000250"/>
    <property type="project" value="UniProtKB"/>
</dbReference>
<dbReference type="GO" id="GO:0005886">
    <property type="term" value="C:plasma membrane"/>
    <property type="evidence" value="ECO:0000250"/>
    <property type="project" value="UniProtKB"/>
</dbReference>
<dbReference type="GO" id="GO:0001726">
    <property type="term" value="C:ruffle"/>
    <property type="evidence" value="ECO:0007669"/>
    <property type="project" value="UniProtKB-SubCell"/>
</dbReference>
<dbReference type="GO" id="GO:0001530">
    <property type="term" value="F:lipopolysaccharide binding"/>
    <property type="evidence" value="ECO:0007669"/>
    <property type="project" value="TreeGrafter"/>
</dbReference>
<dbReference type="GO" id="GO:0001875">
    <property type="term" value="F:lipopolysaccharide immune receptor activity"/>
    <property type="evidence" value="ECO:0000250"/>
    <property type="project" value="UniProtKB"/>
</dbReference>
<dbReference type="GO" id="GO:0061809">
    <property type="term" value="F:NAD+ nucleosidase activity, cyclic ADP-ribose generating"/>
    <property type="evidence" value="ECO:0007669"/>
    <property type="project" value="UniProtKB-EC"/>
</dbReference>
<dbReference type="GO" id="GO:0004888">
    <property type="term" value="F:transmembrane signaling receptor activity"/>
    <property type="evidence" value="ECO:0007669"/>
    <property type="project" value="InterPro"/>
</dbReference>
<dbReference type="GO" id="GO:0050829">
    <property type="term" value="P:defense response to Gram-negative bacterium"/>
    <property type="evidence" value="ECO:0007669"/>
    <property type="project" value="TreeGrafter"/>
</dbReference>
<dbReference type="GO" id="GO:0032497">
    <property type="term" value="P:detection of lipopolysaccharide"/>
    <property type="evidence" value="ECO:0000250"/>
    <property type="project" value="UniProtKB"/>
</dbReference>
<dbReference type="GO" id="GO:0006954">
    <property type="term" value="P:inflammatory response"/>
    <property type="evidence" value="ECO:0007669"/>
    <property type="project" value="UniProtKB-KW"/>
</dbReference>
<dbReference type="GO" id="GO:0045087">
    <property type="term" value="P:innate immune response"/>
    <property type="evidence" value="ECO:0007669"/>
    <property type="project" value="UniProtKB-KW"/>
</dbReference>
<dbReference type="GO" id="GO:0002755">
    <property type="term" value="P:MyD88-dependent toll-like receptor signaling pathway"/>
    <property type="evidence" value="ECO:0007669"/>
    <property type="project" value="TreeGrafter"/>
</dbReference>
<dbReference type="GO" id="GO:0032731">
    <property type="term" value="P:positive regulation of interleukin-1 beta production"/>
    <property type="evidence" value="ECO:0000250"/>
    <property type="project" value="UniProtKB"/>
</dbReference>
<dbReference type="GO" id="GO:1900227">
    <property type="term" value="P:positive regulation of NLRP3 inflammasome complex assembly"/>
    <property type="evidence" value="ECO:0000250"/>
    <property type="project" value="UniProtKB"/>
</dbReference>
<dbReference type="GO" id="GO:0034142">
    <property type="term" value="P:toll-like receptor 4 signaling pathway"/>
    <property type="evidence" value="ECO:0007669"/>
    <property type="project" value="TreeGrafter"/>
</dbReference>
<dbReference type="FunFam" id="3.40.50.10140:FF:000006">
    <property type="entry name" value="Toll-like receptor 4"/>
    <property type="match status" value="1"/>
</dbReference>
<dbReference type="FunFam" id="3.80.10.10:FF:000195">
    <property type="entry name" value="Toll-like receptor 4"/>
    <property type="match status" value="1"/>
</dbReference>
<dbReference type="Gene3D" id="3.80.10.10">
    <property type="entry name" value="Ribonuclease Inhibitor"/>
    <property type="match status" value="1"/>
</dbReference>
<dbReference type="Gene3D" id="3.40.50.10140">
    <property type="entry name" value="Toll/interleukin-1 receptor homology (TIR) domain"/>
    <property type="match status" value="1"/>
</dbReference>
<dbReference type="InterPro" id="IPR000483">
    <property type="entry name" value="Cys-rich_flank_reg_C"/>
</dbReference>
<dbReference type="InterPro" id="IPR001611">
    <property type="entry name" value="Leu-rich_rpt"/>
</dbReference>
<dbReference type="InterPro" id="IPR025875">
    <property type="entry name" value="Leu-rich_rpt_4"/>
</dbReference>
<dbReference type="InterPro" id="IPR003591">
    <property type="entry name" value="Leu-rich_rpt_typical-subtyp"/>
</dbReference>
<dbReference type="InterPro" id="IPR032675">
    <property type="entry name" value="LRR_dom_sf"/>
</dbReference>
<dbReference type="InterPro" id="IPR000157">
    <property type="entry name" value="TIR_dom"/>
</dbReference>
<dbReference type="InterPro" id="IPR017241">
    <property type="entry name" value="Toll-like_receptor"/>
</dbReference>
<dbReference type="InterPro" id="IPR035897">
    <property type="entry name" value="Toll_tir_struct_dom_sf"/>
</dbReference>
<dbReference type="PANTHER" id="PTHR24365">
    <property type="entry name" value="TOLL-LIKE RECEPTOR"/>
    <property type="match status" value="1"/>
</dbReference>
<dbReference type="PANTHER" id="PTHR24365:SF521">
    <property type="entry name" value="TOLL-LIKE RECEPTOR 4"/>
    <property type="match status" value="1"/>
</dbReference>
<dbReference type="Pfam" id="PF12799">
    <property type="entry name" value="LRR_4"/>
    <property type="match status" value="1"/>
</dbReference>
<dbReference type="Pfam" id="PF13516">
    <property type="entry name" value="LRR_6"/>
    <property type="match status" value="1"/>
</dbReference>
<dbReference type="Pfam" id="PF13855">
    <property type="entry name" value="LRR_8"/>
    <property type="match status" value="2"/>
</dbReference>
<dbReference type="Pfam" id="PF01582">
    <property type="entry name" value="TIR"/>
    <property type="match status" value="1"/>
</dbReference>
<dbReference type="PIRSF" id="PIRSF037595">
    <property type="entry name" value="Toll-like_receptor"/>
    <property type="match status" value="1"/>
</dbReference>
<dbReference type="PRINTS" id="PR00019">
    <property type="entry name" value="LEURICHRPT"/>
</dbReference>
<dbReference type="SMART" id="SM00365">
    <property type="entry name" value="LRR_SD22"/>
    <property type="match status" value="6"/>
</dbReference>
<dbReference type="SMART" id="SM00369">
    <property type="entry name" value="LRR_TYP"/>
    <property type="match status" value="13"/>
</dbReference>
<dbReference type="SMART" id="SM00082">
    <property type="entry name" value="LRRCT"/>
    <property type="match status" value="1"/>
</dbReference>
<dbReference type="SMART" id="SM00255">
    <property type="entry name" value="TIR"/>
    <property type="match status" value="1"/>
</dbReference>
<dbReference type="SUPFAM" id="SSF52075">
    <property type="entry name" value="Outer arm dynein light chain 1"/>
    <property type="match status" value="1"/>
</dbReference>
<dbReference type="SUPFAM" id="SSF52047">
    <property type="entry name" value="RNI-like"/>
    <property type="match status" value="1"/>
</dbReference>
<dbReference type="SUPFAM" id="SSF52200">
    <property type="entry name" value="Toll/Interleukin receptor TIR domain"/>
    <property type="match status" value="1"/>
</dbReference>
<dbReference type="PROSITE" id="PS51450">
    <property type="entry name" value="LRR"/>
    <property type="match status" value="13"/>
</dbReference>
<dbReference type="PROSITE" id="PS50104">
    <property type="entry name" value="TIR"/>
    <property type="match status" value="1"/>
</dbReference>
<name>TLR4_BOSTR</name>
<proteinExistence type="evidence at transcript level"/>
<sequence length="841" mass="96108">MMARVRLAAALIPATAILSCLRTESWDPCVQVVPNISYQCMELNLYKIPDNIPISTKMLDLSFNYLRHLGSHNFSSFPELQVLDLSRCEIKIIEDDTFQGLNHLSTLILTGNPIQSLAWGAFSGLSSLQKLVAVETNLVSLNDFPIGHLKTLKELNVAHNFIHSFKLPEYFSNLPNLEHLDLSNNKIQNIYYEDVKVLHQMPLLNLSLDLSLNPLDFIEPGTFKEIKLNGLTLRSNFNSSHVMKTCIQGLAGLKINRLVLGEFKNERKLKGFDRSILEGLCNLTIEQFRIAYLDEFSGDDTDLFNCLENVSVISLLSVSLGSLQALLKDFRWQHLEIINCDFDKFPALKLSSLKKFVFTDNKDISSFTEFQLPSLQYLDLRRNHLSFKGCCSHADFGTTNLKHLDLSFNDVITLGSNFMGLEKLEHLDFQHSTLKQINAFSVFLSLRNLRYLDISYTNVRIVFHGIFTGLVSLKTLKMAGNTFQDNLLPDIFTELTNLTVLDLSKCQLEQVAQTAFHSLSSLQVLNMSHNKLLSLDTFLYEPLHLLRILDCSFNRIMDSKEQDLQNLPRNLTWLNLTQNAFACVCEHQRFLQWVKDQRQLLVGAEQMMCAEPLDMKDMPVLSFRNATCQMSKMIISVSVVTVLLVSVVGVLVYKFYFHLMLLAGCKKYGRGESTYGAFVIYSSQDEDWVRNELVKNLEEGVPPFQLCLHYRDFIPGVAIAANIIQEGFHKSRKVIVVVSQHFIQSRWCIFEYEIAQTWQFLSSRAGIIFIVLQKLEKSLLRQQVELYRLLSRNTYLEWEDSVLGRHVFWRRLRKALLAGKPQSPEGTADAETNPQEATTST</sequence>
<feature type="signal peptide" evidence="3">
    <location>
        <begin position="1"/>
        <end position="23"/>
    </location>
</feature>
<feature type="chain" id="PRO_0000253497" description="Toll-like receptor 4">
    <location>
        <begin position="24"/>
        <end position="841"/>
    </location>
</feature>
<feature type="topological domain" description="Extracellular" evidence="3">
    <location>
        <begin position="24"/>
        <end position="632"/>
    </location>
</feature>
<feature type="transmembrane region" description="Helical" evidence="3">
    <location>
        <begin position="633"/>
        <end position="653"/>
    </location>
</feature>
<feature type="topological domain" description="Cytoplasmic" evidence="3">
    <location>
        <begin position="654"/>
        <end position="841"/>
    </location>
</feature>
<feature type="repeat" description="LRR 1">
    <location>
        <begin position="55"/>
        <end position="76"/>
    </location>
</feature>
<feature type="repeat" description="LRR 2">
    <location>
        <begin position="79"/>
        <end position="100"/>
    </location>
</feature>
<feature type="repeat" description="LRR 3">
    <location>
        <begin position="103"/>
        <end position="124"/>
    </location>
</feature>
<feature type="repeat" description="LRR 4">
    <location>
        <begin position="127"/>
        <end position="148"/>
    </location>
</feature>
<feature type="repeat" description="LRR 5">
    <location>
        <begin position="151"/>
        <end position="172"/>
    </location>
</feature>
<feature type="repeat" description="LRR 6">
    <location>
        <begin position="176"/>
        <end position="197"/>
    </location>
</feature>
<feature type="repeat" description="LRR 7">
    <location>
        <begin position="205"/>
        <end position="225"/>
    </location>
</feature>
<feature type="repeat" description="LRR 8">
    <location>
        <begin position="352"/>
        <end position="373"/>
    </location>
</feature>
<feature type="repeat" description="LRR 9">
    <location>
        <begin position="374"/>
        <end position="395"/>
    </location>
</feature>
<feature type="repeat" description="LRR 10">
    <location>
        <begin position="400"/>
        <end position="422"/>
    </location>
</feature>
<feature type="repeat" description="LRR 11">
    <location>
        <begin position="423"/>
        <end position="444"/>
    </location>
</feature>
<feature type="repeat" description="LRR 12">
    <location>
        <begin position="448"/>
        <end position="469"/>
    </location>
</feature>
<feature type="repeat" description="LRR 13">
    <location>
        <begin position="472"/>
        <end position="495"/>
    </location>
</feature>
<feature type="repeat" description="LRR 14">
    <location>
        <begin position="497"/>
        <end position="518"/>
    </location>
</feature>
<feature type="repeat" description="LRR 15">
    <location>
        <begin position="521"/>
        <end position="542"/>
    </location>
</feature>
<feature type="repeat" description="LRR 16">
    <location>
        <begin position="545"/>
        <end position="568"/>
    </location>
</feature>
<feature type="domain" description="LRRCT">
    <location>
        <begin position="579"/>
        <end position="630"/>
    </location>
</feature>
<feature type="domain" description="TIR" evidence="4">
    <location>
        <begin position="673"/>
        <end position="816"/>
    </location>
</feature>
<feature type="region of interest" description="Disordered" evidence="5">
    <location>
        <begin position="820"/>
        <end position="841"/>
    </location>
</feature>
<feature type="compositionally biased region" description="Polar residues" evidence="5">
    <location>
        <begin position="830"/>
        <end position="841"/>
    </location>
</feature>
<feature type="glycosylation site" description="N-linked (GlcNAc...) asparagine" evidence="3">
    <location>
        <position position="35"/>
    </location>
</feature>
<feature type="glycosylation site" description="N-linked (GlcNAc...) asparagine" evidence="3">
    <location>
        <position position="73"/>
    </location>
</feature>
<feature type="glycosylation site" description="N-linked (GlcNAc...) asparagine" evidence="3">
    <location>
        <position position="205"/>
    </location>
</feature>
<feature type="glycosylation site" description="N-linked (GlcNAc...) asparagine" evidence="3">
    <location>
        <position position="238"/>
    </location>
</feature>
<feature type="glycosylation site" description="N-linked (GlcNAc...) asparagine" evidence="3">
    <location>
        <position position="282"/>
    </location>
</feature>
<feature type="glycosylation site" description="N-linked (GlcNAc...) asparagine" evidence="3">
    <location>
        <position position="309"/>
    </location>
</feature>
<feature type="glycosylation site" description="N-linked (GlcNAc...) asparagine" evidence="3">
    <location>
        <position position="497"/>
    </location>
</feature>
<feature type="glycosylation site" description="N-linked (GlcNAc...) asparagine" evidence="3">
    <location>
        <position position="526"/>
    </location>
</feature>
<feature type="glycosylation site" description="N-linked (GlcNAc...) asparagine" evidence="3">
    <location>
        <position position="570"/>
    </location>
</feature>
<feature type="glycosylation site" description="N-linked (GlcNAc...) asparagine" evidence="3">
    <location>
        <position position="575"/>
    </location>
</feature>
<feature type="glycosylation site" description="N-linked (GlcNAc...) asparagine" evidence="3">
    <location>
        <position position="625"/>
    </location>
</feature>
<feature type="disulfide bond" evidence="1">
    <location>
        <begin position="29"/>
        <end position="40"/>
    </location>
</feature>
<feature type="disulfide bond" evidence="1">
    <location>
        <begin position="281"/>
        <end position="306"/>
    </location>
</feature>
<feature type="disulfide bond" evidence="1">
    <location>
        <begin position="390"/>
        <end position="391"/>
    </location>
</feature>
<feature type="disulfide bond" evidence="1">
    <location>
        <begin position="583"/>
        <end position="609"/>
    </location>
</feature>
<feature type="disulfide bond" evidence="1">
    <location>
        <begin position="585"/>
        <end position="628"/>
    </location>
</feature>
<reference key="1">
    <citation type="submission" date="2005-11" db="EMBL/GenBank/DDBJ databases">
        <title>Full-length cDNA cloning of toll-like receptor 4 in Boselaphus tragocamelus.</title>
        <authorList>
            <person name="Das D.K."/>
            <person name="Saini M."/>
            <person name="Swarup D."/>
            <person name="Yadav M.P."/>
            <person name="Sharma B."/>
            <person name="Gupta P.K."/>
        </authorList>
    </citation>
    <scope>NUCLEOTIDE SEQUENCE [MRNA]</scope>
</reference>
<comment type="function">
    <text evidence="1">Transmembrane receptor that functions as a pattern recognition receptor recognizing pathogen- and damage-associated molecular patterns (PAMPs and DAMPs) to induce innate immune responses via downstream signaling pathways. At the plasma membrane, cooperates with LY96 to mediate the innate immune response to bacterial lipopolysaccharide (LPS). Also involved in LPS-independent inflammatory responses triggered by free fatty acids, such as palmitate, and Ni(2+). Mechanistically, acts via MYD88, TIRAP and TRAF6, leading to NF-kappa-B activation, cytokine secretion and the inflammatory response. Alternatively, CD14-mediated TLR4 internalization via endocytosis is associated with the initiation of a MYD88-independent signaling via the TICAM1-TBK1-IRF3 axis leading to type I interferon production. In addition to the secretion of proinflammatory cytokines, initiates the activation of NLRP3 inflammasome and formation of a positive feedback loop between autophagy and NF-kappa-B signaling cascade. In complex with TLR6, promotes inflammation in monocytes/macrophages by associating with TLR6 and the receptor CD86. Upon ligand binding, such as oxLDL or amyloid-beta 42, the TLR4:TLR6 complex is internalized and triggers inflammatory response, leading to NF-kappa-B-dependent production of CXCL1, CXCL2 and CCL9 cytokines, via MYD88 signaling pathway, and CCL5 cytokine, via TICAM1 signaling pathway. In myeloid dendritic cells, vesicular stomatitis virus glycoprotein G but not LPS promotes the activation of IRF7, leading to type I IFN production in a CD14-dependent manner.</text>
</comment>
<comment type="subunit">
    <text evidence="1 2">Belongs to the lipopolysaccharide (LPS) receptor, a multi-protein complex containing at least CD14, LY96 and TLR4. Binding to bacterial LPS leads to homodimerization. Interacts with LY96 via the extracellular domain. Interacts with MYD88 and TIRAP via their respective TIR domains. Interacts with TICAM2. Interacts with NOX4. Interacts with CNPY3 and HSP90B1; this interaction is required for proper folding in the endoplasmic reticulum. Interacts with MAP3K21; this interaction leads to negative regulation of TLR4 signaling. Interacts with CD36, following CD36 stimulation by oxLDL or amyloid-beta 42, and forms a heterodimer with TLR6. The trimeric complex is internalized and triggers inflammatory response. LYN kinase activity facilitates TLR4-TLR6 heterodimerization and signal initiation. Interacts with TICAM1 in response to LPS in a WDFY1-dependent manner. Interacts with WDFY1 in response to LPS. Interacts with SMPDL3B. Interacts with CEACAM1; upon lipopolysaccharide stimulation, forms a complex including TLR4 and the phosphorylated form of SYK and CEACAM1, which in turn, recruits PTPN6 that dephosphorylates SYK, reducing the production of reactive oxygen species (ROS) and lysosome disruption, which in turn, reduces the activity of the inflammasome. Interacts with RFTN1; the interaction occurs in response to lipopolysaccharide stimulation. Interacts with SCIMP; the interaction occurs in response to lipopolysaccharide stimulation and is enhanced by phosphorylation of SCIMP by LYN (By similarity). This interaction facilitates the phosphorylation of TLR4 by LYN which elicits a selective cytokine response in macrophages (By similarity). Interacts with TRAF3IP3 (By similarity). Interacts with TREM1; this interaction enhances TLR4-mediated inflammatory response (By similarity). Interacts with ZG16B/PAUF (By similarity). Interacts with CD82; this interaction inhibits TLR4-mediated signaling pathway (By similarity).</text>
</comment>
<comment type="subcellular location">
    <subcellularLocation>
        <location evidence="1">Cell membrane</location>
        <topology evidence="1">Single-pass type I membrane protein</topology>
    </subcellularLocation>
    <subcellularLocation>
        <location evidence="1">Early endosome</location>
    </subcellularLocation>
    <subcellularLocation>
        <location evidence="2">Cell projection</location>
        <location evidence="2">Ruffle</location>
    </subcellularLocation>
    <text evidence="1">Upon complex formation with CD36 and TLR6, internalized through dynamin-dependent endocytosis. Colocalizes with RFTN1 at cell membrane and then together with RFTN1 moves to endosomes, upon lipopolysaccharide stimulation.</text>
</comment>
<comment type="domain">
    <text evidence="1">The TIR domain mediates interaction with NOX4.</text>
</comment>
<comment type="PTM">
    <text evidence="2">Phosphorylated on tyrosine residues by LYN after binding lipopolysaccharide.</text>
</comment>
<comment type="PTM">
    <text evidence="1">Ubiquitinated by RNF128 via 'Lys-28'-linked polyubiquitin chains, leading to proteasomal degradation.</text>
</comment>
<comment type="similarity">
    <text evidence="6">Belongs to the Toll-like receptor family.</text>
</comment>
<comment type="caution">
    <text evidence="1 6">In some plant proteins and in human SARM1, the TIR domain has NAD(+) hydrolase (NADase) activity (By similarity). However, despite the presence of the catalytic Asp residue, the isolated TIR domain of human TLR4 lacks NADase activity (By similarity). Based on this, it is unlikely that Toll-like receptors have NADase activity.</text>
</comment>
<accession>Q2V898</accession>
<protein>
    <recommendedName>
        <fullName>Toll-like receptor 4</fullName>
    </recommendedName>
    <cdAntigenName>CD284</cdAntigenName>
</protein>
<evidence type="ECO:0000250" key="1">
    <source>
        <dbReference type="UniProtKB" id="O00206"/>
    </source>
</evidence>
<evidence type="ECO:0000250" key="2">
    <source>
        <dbReference type="UniProtKB" id="Q9QUK6"/>
    </source>
</evidence>
<evidence type="ECO:0000255" key="3"/>
<evidence type="ECO:0000255" key="4">
    <source>
        <dbReference type="PROSITE-ProRule" id="PRU00204"/>
    </source>
</evidence>
<evidence type="ECO:0000256" key="5">
    <source>
        <dbReference type="SAM" id="MobiDB-lite"/>
    </source>
</evidence>
<evidence type="ECO:0000305" key="6"/>